<name>NOG2_MOUSE</name>
<sequence length="728" mass="83345">MVKPKYKGRSTINRSAASTNPDRVQGAGGQNMRDRGTIRRLNMYRQKERRNSRGKVIKPLQYQSTVASGTVARVEPNIKWFGNTRVIKQASLQKFQEEMDKVMKDPYKVVMKQSKLPMSLLHDRIQPHNAKVHILDTESFESTFGPKSQRKRPNLFASDMQSLLENAEMSTESYDQGKDRDLVMEDTGVRNEAQEEIYKKGQSKRIWGELYKVIDSSDVVVQVLDARDPMGTRSPHIEAYLKKEKPWKHLIFVLNKCDLVPTWATKRWVAVLSQDYPTLAFHASLTNPFGKGAFIQLLRQFGKLHTDKKQISVGFIGYPNVGKSSVINTLRSKKVCNVAPIAGETKVWQYITLMRRIFLIDCPGVVYPSEDSETDIVLKGVVQVEKIKAPQDHIGAVLERAKPEYISKTYKIESWENAEDFLEKLALRTGKLLKGGEPDMLTVSKMVLNDWQRGRIPFFVKPPNAELPTDSQLPPSSPLEVPTETTQNNPEEETTETEVERSDSITEKEPEGDCSQDRNSEMQQILARVRQNFGKINVGPQFSADDLVPVEMSDLEDLESSGEEEEQEQEQPGEDAEEERSPDTQEEPVGNDTKAVLRALDEKIAKYQRFLNKAKAKKFSAVRISKDLSEKVFAKYKEEKKTSAEDSDAAPTKKARKWDAQMEEEPSNKTQRMLTCKERRRAARQQQSKKVGVRYYETHNVKNRNRNKKKTSDSEGQKHRRNKFRQKQ</sequence>
<gene>
    <name type="primary">Gnl2</name>
</gene>
<organism>
    <name type="scientific">Mus musculus</name>
    <name type="common">Mouse</name>
    <dbReference type="NCBI Taxonomy" id="10090"/>
    <lineage>
        <taxon>Eukaryota</taxon>
        <taxon>Metazoa</taxon>
        <taxon>Chordata</taxon>
        <taxon>Craniata</taxon>
        <taxon>Vertebrata</taxon>
        <taxon>Euteleostomi</taxon>
        <taxon>Mammalia</taxon>
        <taxon>Eutheria</taxon>
        <taxon>Euarchontoglires</taxon>
        <taxon>Glires</taxon>
        <taxon>Rodentia</taxon>
        <taxon>Myomorpha</taxon>
        <taxon>Muroidea</taxon>
        <taxon>Muridae</taxon>
        <taxon>Murinae</taxon>
        <taxon>Mus</taxon>
        <taxon>Mus</taxon>
    </lineage>
</organism>
<reference key="1">
    <citation type="journal article" date="2005" name="Science">
        <title>The transcriptional landscape of the mammalian genome.</title>
        <authorList>
            <person name="Carninci P."/>
            <person name="Kasukawa T."/>
            <person name="Katayama S."/>
            <person name="Gough J."/>
            <person name="Frith M.C."/>
            <person name="Maeda N."/>
            <person name="Oyama R."/>
            <person name="Ravasi T."/>
            <person name="Lenhard B."/>
            <person name="Wells C."/>
            <person name="Kodzius R."/>
            <person name="Shimokawa K."/>
            <person name="Bajic V.B."/>
            <person name="Brenner S.E."/>
            <person name="Batalov S."/>
            <person name="Forrest A.R."/>
            <person name="Zavolan M."/>
            <person name="Davis M.J."/>
            <person name="Wilming L.G."/>
            <person name="Aidinis V."/>
            <person name="Allen J.E."/>
            <person name="Ambesi-Impiombato A."/>
            <person name="Apweiler R."/>
            <person name="Aturaliya R.N."/>
            <person name="Bailey T.L."/>
            <person name="Bansal M."/>
            <person name="Baxter L."/>
            <person name="Beisel K.W."/>
            <person name="Bersano T."/>
            <person name="Bono H."/>
            <person name="Chalk A.M."/>
            <person name="Chiu K.P."/>
            <person name="Choudhary V."/>
            <person name="Christoffels A."/>
            <person name="Clutterbuck D.R."/>
            <person name="Crowe M.L."/>
            <person name="Dalla E."/>
            <person name="Dalrymple B.P."/>
            <person name="de Bono B."/>
            <person name="Della Gatta G."/>
            <person name="di Bernardo D."/>
            <person name="Down T."/>
            <person name="Engstrom P."/>
            <person name="Fagiolini M."/>
            <person name="Faulkner G."/>
            <person name="Fletcher C.F."/>
            <person name="Fukushima T."/>
            <person name="Furuno M."/>
            <person name="Futaki S."/>
            <person name="Gariboldi M."/>
            <person name="Georgii-Hemming P."/>
            <person name="Gingeras T.R."/>
            <person name="Gojobori T."/>
            <person name="Green R.E."/>
            <person name="Gustincich S."/>
            <person name="Harbers M."/>
            <person name="Hayashi Y."/>
            <person name="Hensch T.K."/>
            <person name="Hirokawa N."/>
            <person name="Hill D."/>
            <person name="Huminiecki L."/>
            <person name="Iacono M."/>
            <person name="Ikeo K."/>
            <person name="Iwama A."/>
            <person name="Ishikawa T."/>
            <person name="Jakt M."/>
            <person name="Kanapin A."/>
            <person name="Katoh M."/>
            <person name="Kawasawa Y."/>
            <person name="Kelso J."/>
            <person name="Kitamura H."/>
            <person name="Kitano H."/>
            <person name="Kollias G."/>
            <person name="Krishnan S.P."/>
            <person name="Kruger A."/>
            <person name="Kummerfeld S.K."/>
            <person name="Kurochkin I.V."/>
            <person name="Lareau L.F."/>
            <person name="Lazarevic D."/>
            <person name="Lipovich L."/>
            <person name="Liu J."/>
            <person name="Liuni S."/>
            <person name="McWilliam S."/>
            <person name="Madan Babu M."/>
            <person name="Madera M."/>
            <person name="Marchionni L."/>
            <person name="Matsuda H."/>
            <person name="Matsuzawa S."/>
            <person name="Miki H."/>
            <person name="Mignone F."/>
            <person name="Miyake S."/>
            <person name="Morris K."/>
            <person name="Mottagui-Tabar S."/>
            <person name="Mulder N."/>
            <person name="Nakano N."/>
            <person name="Nakauchi H."/>
            <person name="Ng P."/>
            <person name="Nilsson R."/>
            <person name="Nishiguchi S."/>
            <person name="Nishikawa S."/>
            <person name="Nori F."/>
            <person name="Ohara O."/>
            <person name="Okazaki Y."/>
            <person name="Orlando V."/>
            <person name="Pang K.C."/>
            <person name="Pavan W.J."/>
            <person name="Pavesi G."/>
            <person name="Pesole G."/>
            <person name="Petrovsky N."/>
            <person name="Piazza S."/>
            <person name="Reed J."/>
            <person name="Reid J.F."/>
            <person name="Ring B.Z."/>
            <person name="Ringwald M."/>
            <person name="Rost B."/>
            <person name="Ruan Y."/>
            <person name="Salzberg S.L."/>
            <person name="Sandelin A."/>
            <person name="Schneider C."/>
            <person name="Schoenbach C."/>
            <person name="Sekiguchi K."/>
            <person name="Semple C.A."/>
            <person name="Seno S."/>
            <person name="Sessa L."/>
            <person name="Sheng Y."/>
            <person name="Shibata Y."/>
            <person name="Shimada H."/>
            <person name="Shimada K."/>
            <person name="Silva D."/>
            <person name="Sinclair B."/>
            <person name="Sperling S."/>
            <person name="Stupka E."/>
            <person name="Sugiura K."/>
            <person name="Sultana R."/>
            <person name="Takenaka Y."/>
            <person name="Taki K."/>
            <person name="Tammoja K."/>
            <person name="Tan S.L."/>
            <person name="Tang S."/>
            <person name="Taylor M.S."/>
            <person name="Tegner J."/>
            <person name="Teichmann S.A."/>
            <person name="Ueda H.R."/>
            <person name="van Nimwegen E."/>
            <person name="Verardo R."/>
            <person name="Wei C.L."/>
            <person name="Yagi K."/>
            <person name="Yamanishi H."/>
            <person name="Zabarovsky E."/>
            <person name="Zhu S."/>
            <person name="Zimmer A."/>
            <person name="Hide W."/>
            <person name="Bult C."/>
            <person name="Grimmond S.M."/>
            <person name="Teasdale R.D."/>
            <person name="Liu E.T."/>
            <person name="Brusic V."/>
            <person name="Quackenbush J."/>
            <person name="Wahlestedt C."/>
            <person name="Mattick J.S."/>
            <person name="Hume D.A."/>
            <person name="Kai C."/>
            <person name="Sasaki D."/>
            <person name="Tomaru Y."/>
            <person name="Fukuda S."/>
            <person name="Kanamori-Katayama M."/>
            <person name="Suzuki M."/>
            <person name="Aoki J."/>
            <person name="Arakawa T."/>
            <person name="Iida J."/>
            <person name="Imamura K."/>
            <person name="Itoh M."/>
            <person name="Kato T."/>
            <person name="Kawaji H."/>
            <person name="Kawagashira N."/>
            <person name="Kawashima T."/>
            <person name="Kojima M."/>
            <person name="Kondo S."/>
            <person name="Konno H."/>
            <person name="Nakano K."/>
            <person name="Ninomiya N."/>
            <person name="Nishio T."/>
            <person name="Okada M."/>
            <person name="Plessy C."/>
            <person name="Shibata K."/>
            <person name="Shiraki T."/>
            <person name="Suzuki S."/>
            <person name="Tagami M."/>
            <person name="Waki K."/>
            <person name="Watahiki A."/>
            <person name="Okamura-Oho Y."/>
            <person name="Suzuki H."/>
            <person name="Kawai J."/>
            <person name="Hayashizaki Y."/>
        </authorList>
    </citation>
    <scope>NUCLEOTIDE SEQUENCE [LARGE SCALE MRNA]</scope>
    <source>
        <strain>C57BL/6J</strain>
    </source>
</reference>
<reference key="2">
    <citation type="journal article" date="2009" name="PLoS Biol.">
        <title>Lineage-specific biology revealed by a finished genome assembly of the mouse.</title>
        <authorList>
            <person name="Church D.M."/>
            <person name="Goodstadt L."/>
            <person name="Hillier L.W."/>
            <person name="Zody M.C."/>
            <person name="Goldstein S."/>
            <person name="She X."/>
            <person name="Bult C.J."/>
            <person name="Agarwala R."/>
            <person name="Cherry J.L."/>
            <person name="DiCuccio M."/>
            <person name="Hlavina W."/>
            <person name="Kapustin Y."/>
            <person name="Meric P."/>
            <person name="Maglott D."/>
            <person name="Birtle Z."/>
            <person name="Marques A.C."/>
            <person name="Graves T."/>
            <person name="Zhou S."/>
            <person name="Teague B."/>
            <person name="Potamousis K."/>
            <person name="Churas C."/>
            <person name="Place M."/>
            <person name="Herschleb J."/>
            <person name="Runnheim R."/>
            <person name="Forrest D."/>
            <person name="Amos-Landgraf J."/>
            <person name="Schwartz D.C."/>
            <person name="Cheng Z."/>
            <person name="Lindblad-Toh K."/>
            <person name="Eichler E.E."/>
            <person name="Ponting C.P."/>
        </authorList>
    </citation>
    <scope>NUCLEOTIDE SEQUENCE [LARGE SCALE GENOMIC DNA]</scope>
    <source>
        <strain>C57BL/6J</strain>
    </source>
</reference>
<reference key="3">
    <citation type="journal article" date="2004" name="Genome Res.">
        <title>The status, quality, and expansion of the NIH full-length cDNA project: the Mammalian Gene Collection (MGC).</title>
        <authorList>
            <consortium name="The MGC Project Team"/>
        </authorList>
    </citation>
    <scope>NUCLEOTIDE SEQUENCE [LARGE SCALE MRNA]</scope>
    <source>
        <strain>Czech II</strain>
        <tissue>Mammary tumor</tissue>
    </source>
</reference>
<reference key="4">
    <citation type="journal article" date="2010" name="Cell">
        <title>A tissue-specific atlas of mouse protein phosphorylation and expression.</title>
        <authorList>
            <person name="Huttlin E.L."/>
            <person name="Jedrychowski M.P."/>
            <person name="Elias J.E."/>
            <person name="Goswami T."/>
            <person name="Rad R."/>
            <person name="Beausoleil S.A."/>
            <person name="Villen J."/>
            <person name="Haas W."/>
            <person name="Sowa M.E."/>
            <person name="Gygi S.P."/>
        </authorList>
    </citation>
    <scope>PHOSPHORYLATION [LARGE SCALE ANALYSIS] AT SER-504</scope>
    <scope>IDENTIFICATION BY MASS SPECTROMETRY [LARGE SCALE ANALYSIS]</scope>
    <source>
        <tissue>Spleen</tissue>
        <tissue>Testis</tissue>
    </source>
</reference>
<keyword id="KW-0007">Acetylation</keyword>
<keyword id="KW-0342">GTP-binding</keyword>
<keyword id="KW-0547">Nucleotide-binding</keyword>
<keyword id="KW-0539">Nucleus</keyword>
<keyword id="KW-0597">Phosphoprotein</keyword>
<keyword id="KW-1185">Reference proteome</keyword>
<keyword id="KW-0690">Ribosome biogenesis</keyword>
<comment type="function">
    <text evidence="1">GTPase that associates with pre-60S ribosomal subunits in the nucleolus and is required for their nuclear export and maturation. May promote cell proliferation possibly by increasing p53/TP53 protein levels, and consequently those of its downstream product CDKN1A/p21, and decreasing RPL23A protein levels.</text>
</comment>
<comment type="subunit">
    <text evidence="1">Interacts with LYAR and RPL23A. Interacts with the nuclear importin-beta receptor and, at a lower extent, with importin-alpha.</text>
</comment>
<comment type="subcellular location">
    <subcellularLocation>
        <location evidence="1">Nucleus</location>
        <location evidence="1">Nucleolus</location>
    </subcellularLocation>
</comment>
<comment type="similarity">
    <text evidence="3">Belongs to the TRAFAC class YlqF/YawG GTPase family. NOG2 subfamily.</text>
</comment>
<accession>Q99LH1</accession>
<accession>B1ASC3</accession>
<accession>Q8BIF8</accession>
<protein>
    <recommendedName>
        <fullName>Nucleolar GTP-binding protein 2</fullName>
    </recommendedName>
</protein>
<proteinExistence type="evidence at protein level"/>
<dbReference type="EMBL" id="AK077532">
    <property type="protein sequence ID" value="BAC36850.1"/>
    <property type="molecule type" value="mRNA"/>
</dbReference>
<dbReference type="EMBL" id="AL626775">
    <property type="status" value="NOT_ANNOTATED_CDS"/>
    <property type="molecule type" value="Genomic_DNA"/>
</dbReference>
<dbReference type="EMBL" id="BC003262">
    <property type="protein sequence ID" value="AAH03262.1"/>
    <property type="molecule type" value="mRNA"/>
</dbReference>
<dbReference type="CCDS" id="CCDS18634.1"/>
<dbReference type="RefSeq" id="NP_663527.2">
    <property type="nucleotide sequence ID" value="NM_145552.2"/>
</dbReference>
<dbReference type="RefSeq" id="XP_036019938.1">
    <property type="nucleotide sequence ID" value="XM_036164045.1"/>
</dbReference>
<dbReference type="SMR" id="Q99LH1"/>
<dbReference type="BioGRID" id="231010">
    <property type="interactions" value="35"/>
</dbReference>
<dbReference type="CORUM" id="Q99LH1"/>
<dbReference type="FunCoup" id="Q99LH1">
    <property type="interactions" value="2217"/>
</dbReference>
<dbReference type="IntAct" id="Q99LH1">
    <property type="interactions" value="2"/>
</dbReference>
<dbReference type="MINT" id="Q99LH1"/>
<dbReference type="STRING" id="10090.ENSMUSP00000030684"/>
<dbReference type="GlyGen" id="Q99LH1">
    <property type="glycosylation" value="2 sites, 1 O-linked glycan (2 sites)"/>
</dbReference>
<dbReference type="iPTMnet" id="Q99LH1"/>
<dbReference type="PhosphoSitePlus" id="Q99LH1"/>
<dbReference type="SwissPalm" id="Q99LH1"/>
<dbReference type="PaxDb" id="10090-ENSMUSP00000030684"/>
<dbReference type="ProteomicsDB" id="253093"/>
<dbReference type="Pumba" id="Q99LH1"/>
<dbReference type="Antibodypedia" id="31740">
    <property type="antibodies" value="172 antibodies from 29 providers"/>
</dbReference>
<dbReference type="DNASU" id="230737"/>
<dbReference type="Ensembl" id="ENSMUST00000030684.8">
    <property type="protein sequence ID" value="ENSMUSP00000030684.8"/>
    <property type="gene ID" value="ENSMUSG00000028869.14"/>
</dbReference>
<dbReference type="GeneID" id="230737"/>
<dbReference type="KEGG" id="mmu:230737"/>
<dbReference type="UCSC" id="uc008uro.2">
    <property type="organism name" value="mouse"/>
</dbReference>
<dbReference type="AGR" id="MGI:2385207"/>
<dbReference type="CTD" id="29889"/>
<dbReference type="MGI" id="MGI:2385207">
    <property type="gene designation" value="Gnl2"/>
</dbReference>
<dbReference type="VEuPathDB" id="HostDB:ENSMUSG00000028869"/>
<dbReference type="eggNOG" id="KOG2423">
    <property type="taxonomic scope" value="Eukaryota"/>
</dbReference>
<dbReference type="GeneTree" id="ENSGT00810000125524"/>
<dbReference type="HOGENOM" id="CLU_011106_4_1_1"/>
<dbReference type="InParanoid" id="Q99LH1"/>
<dbReference type="OMA" id="KNPEDHI"/>
<dbReference type="OrthoDB" id="444945at2759"/>
<dbReference type="PhylomeDB" id="Q99LH1"/>
<dbReference type="TreeFam" id="TF105668"/>
<dbReference type="BioGRID-ORCS" id="230737">
    <property type="hits" value="26 hits in 81 CRISPR screens"/>
</dbReference>
<dbReference type="ChiTaRS" id="Gnl2">
    <property type="organism name" value="mouse"/>
</dbReference>
<dbReference type="PRO" id="PR:Q99LH1"/>
<dbReference type="Proteomes" id="UP000000589">
    <property type="component" value="Chromosome 4"/>
</dbReference>
<dbReference type="RNAct" id="Q99LH1">
    <property type="molecule type" value="protein"/>
</dbReference>
<dbReference type="Bgee" id="ENSMUSG00000028869">
    <property type="expression patterns" value="Expressed in floor plate of midbrain and 272 other cell types or tissues"/>
</dbReference>
<dbReference type="ExpressionAtlas" id="Q99LH1">
    <property type="expression patterns" value="baseline and differential"/>
</dbReference>
<dbReference type="GO" id="GO:0005730">
    <property type="term" value="C:nucleolus"/>
    <property type="evidence" value="ECO:0007669"/>
    <property type="project" value="UniProtKB-SubCell"/>
</dbReference>
<dbReference type="GO" id="GO:0005525">
    <property type="term" value="F:GTP binding"/>
    <property type="evidence" value="ECO:0007669"/>
    <property type="project" value="UniProtKB-KW"/>
</dbReference>
<dbReference type="GO" id="GO:0042254">
    <property type="term" value="P:ribosome biogenesis"/>
    <property type="evidence" value="ECO:0007669"/>
    <property type="project" value="UniProtKB-KW"/>
</dbReference>
<dbReference type="CDD" id="cd01858">
    <property type="entry name" value="NGP_1"/>
    <property type="match status" value="1"/>
</dbReference>
<dbReference type="FunFam" id="3.40.50.300:FF:000559">
    <property type="entry name" value="Nuclear/nucleolar GTPase 2"/>
    <property type="match status" value="1"/>
</dbReference>
<dbReference type="FunFam" id="1.10.1580.10:FF:000001">
    <property type="entry name" value="Nucleolar GTP-binding protein 2"/>
    <property type="match status" value="1"/>
</dbReference>
<dbReference type="Gene3D" id="1.10.1580.10">
    <property type="match status" value="1"/>
</dbReference>
<dbReference type="Gene3D" id="3.40.50.300">
    <property type="entry name" value="P-loop containing nucleotide triphosphate hydrolases"/>
    <property type="match status" value="1"/>
</dbReference>
<dbReference type="InterPro" id="IPR030378">
    <property type="entry name" value="G_CP_dom"/>
</dbReference>
<dbReference type="InterPro" id="IPR024929">
    <property type="entry name" value="GNL2_CP_dom"/>
</dbReference>
<dbReference type="InterPro" id="IPR006073">
    <property type="entry name" value="GTP-bd"/>
</dbReference>
<dbReference type="InterPro" id="IPR023179">
    <property type="entry name" value="GTP-bd_ortho_bundle_sf"/>
</dbReference>
<dbReference type="InterPro" id="IPR012971">
    <property type="entry name" value="NOG2_N_dom"/>
</dbReference>
<dbReference type="InterPro" id="IPR027417">
    <property type="entry name" value="P-loop_NTPase"/>
</dbReference>
<dbReference type="InterPro" id="IPR050755">
    <property type="entry name" value="TRAFAC_YlqF/YawG_RiboMat"/>
</dbReference>
<dbReference type="PANTHER" id="PTHR11089">
    <property type="entry name" value="GTP-BINDING PROTEIN-RELATED"/>
    <property type="match status" value="1"/>
</dbReference>
<dbReference type="PANTHER" id="PTHR11089:SF9">
    <property type="entry name" value="NUCLEOLAR GTP-BINDING PROTEIN 2"/>
    <property type="match status" value="1"/>
</dbReference>
<dbReference type="Pfam" id="PF01926">
    <property type="entry name" value="MMR_HSR1"/>
    <property type="match status" value="1"/>
</dbReference>
<dbReference type="Pfam" id="PF08153">
    <property type="entry name" value="NGP1NT"/>
    <property type="match status" value="1"/>
</dbReference>
<dbReference type="PRINTS" id="PR00326">
    <property type="entry name" value="GTP1OBG"/>
</dbReference>
<dbReference type="SUPFAM" id="SSF52540">
    <property type="entry name" value="P-loop containing nucleoside triphosphate hydrolases"/>
    <property type="match status" value="1"/>
</dbReference>
<dbReference type="PROSITE" id="PS51721">
    <property type="entry name" value="G_CP"/>
    <property type="match status" value="1"/>
</dbReference>
<evidence type="ECO:0000250" key="1">
    <source>
        <dbReference type="UniProtKB" id="Q13823"/>
    </source>
</evidence>
<evidence type="ECO:0000255" key="2"/>
<evidence type="ECO:0000255" key="3">
    <source>
        <dbReference type="PROSITE-ProRule" id="PRU01058"/>
    </source>
</evidence>
<evidence type="ECO:0000256" key="4">
    <source>
        <dbReference type="SAM" id="MobiDB-lite"/>
    </source>
</evidence>
<evidence type="ECO:0000305" key="5"/>
<evidence type="ECO:0007744" key="6">
    <source>
    </source>
</evidence>
<feature type="chain" id="PRO_0000215807" description="Nucleolar GTP-binding protein 2">
    <location>
        <begin position="1"/>
        <end position="728"/>
    </location>
</feature>
<feature type="domain" description="CP-type G" evidence="3">
    <location>
        <begin position="207"/>
        <end position="368"/>
    </location>
</feature>
<feature type="region of interest" description="Disordered" evidence="4">
    <location>
        <begin position="1"/>
        <end position="33"/>
    </location>
</feature>
<feature type="region of interest" description="Disordered" evidence="4">
    <location>
        <begin position="462"/>
        <end position="521"/>
    </location>
</feature>
<feature type="region of interest" description="Disordered" evidence="4">
    <location>
        <begin position="538"/>
        <end position="595"/>
    </location>
</feature>
<feature type="region of interest" description="Disordered" evidence="4">
    <location>
        <begin position="636"/>
        <end position="728"/>
    </location>
</feature>
<feature type="compositionally biased region" description="Polar residues" evidence="4">
    <location>
        <begin position="10"/>
        <end position="22"/>
    </location>
</feature>
<feature type="compositionally biased region" description="Low complexity" evidence="4">
    <location>
        <begin position="480"/>
        <end position="489"/>
    </location>
</feature>
<feature type="compositionally biased region" description="Basic and acidic residues" evidence="4">
    <location>
        <begin position="498"/>
        <end position="520"/>
    </location>
</feature>
<feature type="compositionally biased region" description="Acidic residues" evidence="4">
    <location>
        <begin position="553"/>
        <end position="586"/>
    </location>
</feature>
<feature type="compositionally biased region" description="Basic residues" evidence="4">
    <location>
        <begin position="718"/>
        <end position="728"/>
    </location>
</feature>
<feature type="binding site" evidence="2">
    <location>
        <begin position="317"/>
        <end position="324"/>
    </location>
    <ligand>
        <name>GTP</name>
        <dbReference type="ChEBI" id="CHEBI:37565"/>
    </ligand>
</feature>
<feature type="binding site" evidence="2">
    <location>
        <begin position="361"/>
        <end position="365"/>
    </location>
    <ligand>
        <name>GTP</name>
        <dbReference type="ChEBI" id="CHEBI:37565"/>
    </ligand>
</feature>
<feature type="modified residue" description="N-acetylmethionine" evidence="1">
    <location>
        <position position="1"/>
    </location>
</feature>
<feature type="modified residue" description="Phosphoserine" evidence="6">
    <location>
        <position position="504"/>
    </location>
</feature>
<feature type="sequence conflict" description="In Ref. 1; BAC36850." evidence="5" ref="1">
    <original>Q</original>
    <variation>K</variation>
    <location>
        <position position="176"/>
    </location>
</feature>
<feature type="sequence conflict" description="In Ref. 3; AAH03262." evidence="5" ref="3">
    <original>L</original>
    <variation>I</variation>
    <location>
        <position position="467"/>
    </location>
</feature>
<feature type="sequence conflict" description="In Ref. 1; BAC36850." evidence="5" ref="1">
    <original>R</original>
    <variation>S</variation>
    <location>
        <position position="530"/>
    </location>
</feature>
<feature type="sequence conflict" description="In Ref. 3; AAH03262." evidence="5" ref="3">
    <original>D</original>
    <variation>V</variation>
    <location>
        <position position="646"/>
    </location>
</feature>